<comment type="function">
    <text evidence="1">RNA-directed RNA polymerase that is involved in transcription and genome replication. Following infection, it catalyzes the synthesis of fully conservative plus strands. After core assembly, which consists in recruitment of one capped plus-strand for each genomic segments and polymerase complexes, the polymerase switches mode and catalyzes the synthesis of complementary minus-strands (By similarity).</text>
</comment>
<comment type="catalytic activity">
    <reaction>
        <text>RNA(n) + a ribonucleoside 5'-triphosphate = RNA(n+1) + diphosphate</text>
        <dbReference type="Rhea" id="RHEA:21248"/>
        <dbReference type="Rhea" id="RHEA-COMP:14527"/>
        <dbReference type="Rhea" id="RHEA-COMP:17342"/>
        <dbReference type="ChEBI" id="CHEBI:33019"/>
        <dbReference type="ChEBI" id="CHEBI:61557"/>
        <dbReference type="ChEBI" id="CHEBI:140395"/>
        <dbReference type="EC" id="2.7.7.48"/>
    </reaction>
</comment>
<dbReference type="EC" id="2.7.7.48"/>
<dbReference type="EMBL" id="AY277888">
    <property type="protein sequence ID" value="AAP45577.1"/>
    <property type="molecule type" value="Genomic_RNA"/>
</dbReference>
<dbReference type="RefSeq" id="YP_001936004.1">
    <property type="nucleotide sequence ID" value="NC_010743.1"/>
</dbReference>
<dbReference type="GeneID" id="6336086"/>
<dbReference type="KEGG" id="vg:6336086"/>
<dbReference type="Proteomes" id="UP000006719">
    <property type="component" value="Genome"/>
</dbReference>
<dbReference type="GO" id="GO:0016787">
    <property type="term" value="F:hydrolase activity"/>
    <property type="evidence" value="ECO:0007669"/>
    <property type="project" value="UniProtKB-KW"/>
</dbReference>
<dbReference type="GO" id="GO:0003968">
    <property type="term" value="F:RNA-directed RNA polymerase activity"/>
    <property type="evidence" value="ECO:0007669"/>
    <property type="project" value="UniProtKB-KW"/>
</dbReference>
<dbReference type="Gene3D" id="3.90.1850.10">
    <property type="entry name" value="RNA-directed RNA polymerase lambda-3"/>
    <property type="match status" value="1"/>
</dbReference>
<dbReference type="InterPro" id="IPR054006">
    <property type="entry name" value="RdRP_N"/>
</dbReference>
<dbReference type="Pfam" id="PF22209">
    <property type="entry name" value="CPV_RdRP_N"/>
    <property type="match status" value="1"/>
</dbReference>
<dbReference type="Pfam" id="PF22212">
    <property type="entry name" value="CPV_RdRP_pol_dom"/>
    <property type="match status" value="1"/>
</dbReference>
<keyword id="KW-0378">Hydrolase</keyword>
<keyword id="KW-0548">Nucleotidyltransferase</keyword>
<keyword id="KW-1185">Reference proteome</keyword>
<keyword id="KW-0696">RNA-directed RNA polymerase</keyword>
<keyword id="KW-0808">Transferase</keyword>
<keyword id="KW-0693">Viral RNA replication</keyword>
<proteinExistence type="inferred from homology"/>
<accession>Q7TDB6</accession>
<protein>
    <recommendedName>
        <fullName>RNA-directed RNA polymerase VP1</fullName>
        <ecNumber>2.7.7.48</ecNumber>
    </recommendedName>
</protein>
<organism>
    <name type="scientific">Cryphonectria parasitica mycoreovirus 1 (strain 9B21)</name>
    <name type="common">CpMYRV-1</name>
    <dbReference type="NCBI Taxonomy" id="230407"/>
    <lineage>
        <taxon>Viruses</taxon>
        <taxon>Riboviria</taxon>
        <taxon>Orthornavirae</taxon>
        <taxon>Duplornaviricota</taxon>
        <taxon>Resentoviricetes</taxon>
        <taxon>Reovirales</taxon>
        <taxon>Spinareoviridae</taxon>
        <taxon>Mycoreovirus</taxon>
        <taxon>Mycoreovirus 1</taxon>
    </lineage>
</organism>
<evidence type="ECO:0000250" key="1"/>
<reference key="1">
    <citation type="journal article" date="2004" name="J. Virol.">
        <title>A reovirus of the fungus Cryphonectria parasitica that is infectious as particles and related to the coltivirus genus of animal pathogens.</title>
        <authorList>
            <person name="Hillman B.I."/>
            <person name="Supyani S."/>
            <person name="Kondo H."/>
            <person name="Suzuki N."/>
        </authorList>
    </citation>
    <scope>NUCLEOTIDE SEQUENCE [GENOMIC RNA]</scope>
</reference>
<sequence>MSLTSRYTHFVPDSTITEILNDSNTPQILLHYANIVNGSTPVHFTSHHDNQVNWTVATLTRMSQYMIPDFMKLFPPLEPTLSLQPDCHCSFINLPRPEIKIPIEILSPPKPNYAKYHYDATTSRVFVNSKHEMYMDNFDVSQLIRDVAAIKTDSPSGNITKGLLKTFHDSIKLRALSPIMSMFHSLLSYRCPCCTSLNGMKKLNHLCFQYSSIYAFLCDMVRPYMCVPFFVDRLGVQILPGFKVSSQYPLLFFEAIELMHTVGLGNLSDSLSGWCFYTWLDRARIGVFREMFNRRGSITMLKSRVVSTGTIFRFSQREFVIESITEQRSTDISPTFEECSFSDSQYIQDNCYKPIYDITTTLDDVKCRWLDVALNYFYGAVLYVTGPVSLALEQSGMGRPGSLNLQFGGTTDVYVEGRWITIDVEPVSPFVSRIKQLADRELAKTKVNGDSLEHGFFEAQTTNSAGNTKETLAGLRSEIIEQHDSPQEGRLLASMAGIRVIDAMRRFNTTFRDHTEFLNEVRRPTKAGMRYQQQRRPRVIQMTGTEAQLGGWLLLNVYEPTYKRLGYTSSGKNIGDIRDMQAVLEASGQNGINSSVDIIGMDASTQNTHVTLLGSAAIKAYNPERIGFPKMFFQSTHNGGDANSRVLPTRVTRDGQTIPKDDDVKYNLPQLAIIYSLHGMHGPTILYDGYFAPAVLTSQTVFRSGWYNTSSQHTMLGSLVLLSLEEDIRNGYKNPYDGAPERSLIAKHWHSIRIIGRVLGDDILLKAFGPPTLTPDELREVTAEVCAEFEHRMELLGFLCERAFSDVMCEFLKQKGFGGAPHMFPDRLVLYTSERGNQAMTNPTTMYRVCDALIIEFNSRSRNIFNTCVSRRVLQTVCSTFALRMTSSGHLVRRSYASRKPYSRVAKVSDGILSELHNHKTVFRIIDYNVLGDHIAMIFLPMLWATNHILGCPPPAIVSISGANIPAASPLTYPSAAITTFWLTATSRRKIDFDSSATAYKKSMSDISNLTAVPLDIIFSFSNAMELSPLSINLDKDYDIDTLRTFGFIVGIMSDSLFPTPSATRAKIKSPVVDDWSRYADSLLNPTRVRSSHHGSEILAESNVVVPYELRYAHRGTAKVRQSMYELPVTDLEYGENTMTTLTQLSESLKVKPGTSKLLRDAMLAGEVFVIPTTHPVTLPCPSFDAHGYGHIIPPNSLQSLLLTHLGLPVSSASYTSSFAKTILSDGKLPGSAEAYLSLYQETYKKGPSAVAYLKDAIGFSDSSMSALERLASNGLYGISGASFAYNPRGGFFFRFDQDNADRFGTSLSPSPTIRRLDIVHMMFTMLMYPTTMVSQNQWMMVRFGRSFSRLARR</sequence>
<name>RDRP_MYRV9</name>
<organismHost>
    <name type="scientific">Cryphonectria parasitica</name>
    <name type="common">Chestnut blight fungus</name>
    <name type="synonym">Endothia parasitica</name>
    <dbReference type="NCBI Taxonomy" id="5116"/>
</organismHost>
<feature type="chain" id="PRO_0000403423" description="RNA-directed RNA polymerase VP1">
    <location>
        <begin position="1"/>
        <end position="1354"/>
    </location>
</feature>